<sequence>MFEKYIMYLKNLIFFQFIVYFFFISLTILIIKNFQQEYSKSILDKQVAQENLTEEVLKLYSVINSKEEILESYKKYVALSVPKNSVSCLNYQELIPRIKSLGSKYNLVEPIDVSINSVFFKNNVQVIEGENESIHVNNYSINIKYACADFLTFLKIFSEIYSYMPPNTLISFVRVRNEEVLTPKNIYKLSVNHAPNLIYTKLILYIRELSSK</sequence>
<accession>Q9ZCA6</accession>
<gene>
    <name type="ordered locus">RP854</name>
</gene>
<name>Y854_RICPR</name>
<reference key="1">
    <citation type="journal article" date="1998" name="Nature">
        <title>The genome sequence of Rickettsia prowazekii and the origin of mitochondria.</title>
        <authorList>
            <person name="Andersson S.G.E."/>
            <person name="Zomorodipour A."/>
            <person name="Andersson J.O."/>
            <person name="Sicheritz-Ponten T."/>
            <person name="Alsmark U.C.M."/>
            <person name="Podowski R.M."/>
            <person name="Naeslund A.K."/>
            <person name="Eriksson A.-S."/>
            <person name="Winkler H.H."/>
            <person name="Kurland C.G."/>
        </authorList>
    </citation>
    <scope>NUCLEOTIDE SEQUENCE [LARGE SCALE GENOMIC DNA]</scope>
    <source>
        <strain>Madrid E</strain>
    </source>
</reference>
<protein>
    <recommendedName>
        <fullName>Uncharacterized protein RP854</fullName>
    </recommendedName>
</protein>
<keyword id="KW-0472">Membrane</keyword>
<keyword id="KW-1185">Reference proteome</keyword>
<keyword id="KW-0812">Transmembrane</keyword>
<keyword id="KW-1133">Transmembrane helix</keyword>
<comment type="subcellular location">
    <subcellularLocation>
        <location evidence="2">Membrane</location>
        <topology evidence="2">Single-pass membrane protein</topology>
    </subcellularLocation>
</comment>
<dbReference type="EMBL" id="AJ235273">
    <property type="protein sequence ID" value="CAA15278.1"/>
    <property type="molecule type" value="Genomic_DNA"/>
</dbReference>
<dbReference type="PIR" id="F71647">
    <property type="entry name" value="F71647"/>
</dbReference>
<dbReference type="RefSeq" id="NP_221202.1">
    <property type="nucleotide sequence ID" value="NC_000963.1"/>
</dbReference>
<dbReference type="RefSeq" id="WP_004599683.1">
    <property type="nucleotide sequence ID" value="NC_000963.1"/>
</dbReference>
<dbReference type="SMR" id="Q9ZCA6"/>
<dbReference type="STRING" id="272947.gene:17555923"/>
<dbReference type="EnsemblBacteria" id="CAA15278">
    <property type="protein sequence ID" value="CAA15278"/>
    <property type="gene ID" value="CAA15278"/>
</dbReference>
<dbReference type="KEGG" id="rpr:RP854"/>
<dbReference type="PATRIC" id="fig|272947.5.peg.892"/>
<dbReference type="HOGENOM" id="CLU_1304097_0_0_5"/>
<dbReference type="OrthoDB" id="7160770at2"/>
<dbReference type="Proteomes" id="UP000002480">
    <property type="component" value="Chromosome"/>
</dbReference>
<dbReference type="GO" id="GO:0016020">
    <property type="term" value="C:membrane"/>
    <property type="evidence" value="ECO:0007669"/>
    <property type="project" value="UniProtKB-SubCell"/>
</dbReference>
<dbReference type="InterPro" id="IPR020135">
    <property type="entry name" value="Uncharacterised_RP854"/>
</dbReference>
<dbReference type="Pfam" id="PF17460">
    <property type="entry name" value="RP854"/>
    <property type="match status" value="1"/>
</dbReference>
<proteinExistence type="predicted"/>
<feature type="chain" id="PRO_0000101422" description="Uncharacterized protein RP854">
    <location>
        <begin position="1"/>
        <end position="212"/>
    </location>
</feature>
<feature type="transmembrane region" description="Helical" evidence="1">
    <location>
        <begin position="11"/>
        <end position="31"/>
    </location>
</feature>
<organism>
    <name type="scientific">Rickettsia prowazekii (strain Madrid E)</name>
    <dbReference type="NCBI Taxonomy" id="272947"/>
    <lineage>
        <taxon>Bacteria</taxon>
        <taxon>Pseudomonadati</taxon>
        <taxon>Pseudomonadota</taxon>
        <taxon>Alphaproteobacteria</taxon>
        <taxon>Rickettsiales</taxon>
        <taxon>Rickettsiaceae</taxon>
        <taxon>Rickettsieae</taxon>
        <taxon>Rickettsia</taxon>
        <taxon>typhus group</taxon>
    </lineage>
</organism>
<evidence type="ECO:0000255" key="1"/>
<evidence type="ECO:0000305" key="2"/>